<reference key="1">
    <citation type="journal article" date="2007" name="Science">
        <title>The Fusarium graminearum genome reveals a link between localized polymorphism and pathogen specialization.</title>
        <authorList>
            <person name="Cuomo C.A."/>
            <person name="Gueldener U."/>
            <person name="Xu J.-R."/>
            <person name="Trail F."/>
            <person name="Turgeon B.G."/>
            <person name="Di Pietro A."/>
            <person name="Walton J.D."/>
            <person name="Ma L.-J."/>
            <person name="Baker S.E."/>
            <person name="Rep M."/>
            <person name="Adam G."/>
            <person name="Antoniw J."/>
            <person name="Baldwin T."/>
            <person name="Calvo S.E."/>
            <person name="Chang Y.-L."/>
            <person name="DeCaprio D."/>
            <person name="Gale L.R."/>
            <person name="Gnerre S."/>
            <person name="Goswami R.S."/>
            <person name="Hammond-Kosack K."/>
            <person name="Harris L.J."/>
            <person name="Hilburn K."/>
            <person name="Kennell J.C."/>
            <person name="Kroken S."/>
            <person name="Magnuson J.K."/>
            <person name="Mannhaupt G."/>
            <person name="Mauceli E.W."/>
            <person name="Mewes H.-W."/>
            <person name="Mitterbauer R."/>
            <person name="Muehlbauer G."/>
            <person name="Muensterkoetter M."/>
            <person name="Nelson D."/>
            <person name="O'Donnell K."/>
            <person name="Ouellet T."/>
            <person name="Qi W."/>
            <person name="Quesneville H."/>
            <person name="Roncero M.I.G."/>
            <person name="Seong K.-Y."/>
            <person name="Tetko I.V."/>
            <person name="Urban M."/>
            <person name="Waalwijk C."/>
            <person name="Ward T.J."/>
            <person name="Yao J."/>
            <person name="Birren B.W."/>
            <person name="Kistler H.C."/>
        </authorList>
    </citation>
    <scope>NUCLEOTIDE SEQUENCE [LARGE SCALE GENOMIC DNA]</scope>
    <source>
        <strain>ATCC MYA-4620 / CBS 123657 / FGSC 9075 / NRRL 31084 / PH-1</strain>
    </source>
</reference>
<reference key="2">
    <citation type="journal article" date="2010" name="Nature">
        <title>Comparative genomics reveals mobile pathogenicity chromosomes in Fusarium.</title>
        <authorList>
            <person name="Ma L.-J."/>
            <person name="van der Does H.C."/>
            <person name="Borkovich K.A."/>
            <person name="Coleman J.J."/>
            <person name="Daboussi M.-J."/>
            <person name="Di Pietro A."/>
            <person name="Dufresne M."/>
            <person name="Freitag M."/>
            <person name="Grabherr M."/>
            <person name="Henrissat B."/>
            <person name="Houterman P.M."/>
            <person name="Kang S."/>
            <person name="Shim W.-B."/>
            <person name="Woloshuk C."/>
            <person name="Xie X."/>
            <person name="Xu J.-R."/>
            <person name="Antoniw J."/>
            <person name="Baker S.E."/>
            <person name="Bluhm B.H."/>
            <person name="Breakspear A."/>
            <person name="Brown D.W."/>
            <person name="Butchko R.A.E."/>
            <person name="Chapman S."/>
            <person name="Coulson R."/>
            <person name="Coutinho P.M."/>
            <person name="Danchin E.G.J."/>
            <person name="Diener A."/>
            <person name="Gale L.R."/>
            <person name="Gardiner D.M."/>
            <person name="Goff S."/>
            <person name="Hammond-Kosack K.E."/>
            <person name="Hilburn K."/>
            <person name="Hua-Van A."/>
            <person name="Jonkers W."/>
            <person name="Kazan K."/>
            <person name="Kodira C.D."/>
            <person name="Koehrsen M."/>
            <person name="Kumar L."/>
            <person name="Lee Y.-H."/>
            <person name="Li L."/>
            <person name="Manners J.M."/>
            <person name="Miranda-Saavedra D."/>
            <person name="Mukherjee M."/>
            <person name="Park G."/>
            <person name="Park J."/>
            <person name="Park S.-Y."/>
            <person name="Proctor R.H."/>
            <person name="Regev A."/>
            <person name="Ruiz-Roldan M.C."/>
            <person name="Sain D."/>
            <person name="Sakthikumar S."/>
            <person name="Sykes S."/>
            <person name="Schwartz D.C."/>
            <person name="Turgeon B.G."/>
            <person name="Wapinski I."/>
            <person name="Yoder O."/>
            <person name="Young S."/>
            <person name="Zeng Q."/>
            <person name="Zhou S."/>
            <person name="Galagan J."/>
            <person name="Cuomo C.A."/>
            <person name="Kistler H.C."/>
            <person name="Rep M."/>
        </authorList>
    </citation>
    <scope>GENOME REANNOTATION</scope>
    <source>
        <strain>ATCC MYA-4620 / CBS 123657 / FGSC 9075 / NRRL 31084 / PH-1</strain>
    </source>
</reference>
<reference key="3">
    <citation type="journal article" date="2015" name="BMC Genomics">
        <title>The completed genome sequence of the pathogenic ascomycete fungus Fusarium graminearum.</title>
        <authorList>
            <person name="King R."/>
            <person name="Urban M."/>
            <person name="Hammond-Kosack M.C.U."/>
            <person name="Hassani-Pak K."/>
            <person name="Hammond-Kosack K.E."/>
        </authorList>
    </citation>
    <scope>NUCLEOTIDE SEQUENCE [LARGE SCALE GENOMIC DNA]</scope>
    <source>
        <strain>ATCC MYA-4620 / CBS 123657 / FGSC 9075 / NRRL 31084 / PH-1</strain>
    </source>
</reference>
<proteinExistence type="inferred from homology"/>
<accession>Q4HVX7</accession>
<accession>A0A098E110</accession>
<accession>A0A0E0SMZ3</accession>
<accession>A0A1C3YK94</accession>
<accession>I1S295</accession>
<accession>V6RTM9</accession>
<comment type="function">
    <text evidence="1">Electron carrier protein. The oxidized form of the cytochrome c heme group can accept an electron from the heme group of the cytochrome c1 subunit of cytochrome reductase. Cytochrome c then transfers this electron to the cytochrome oxidase complex, the final protein carrier in the mitochondrial electron-transport chain (By similarity).</text>
</comment>
<comment type="subcellular location">
    <subcellularLocation>
        <location evidence="1">Mitochondrion intermembrane space</location>
    </subcellularLocation>
    <text evidence="1">Loosely associated with the inner membrane.</text>
</comment>
<comment type="PTM">
    <text evidence="1">Binds 1 heme c group covalently per subunit.</text>
</comment>
<comment type="similarity">
    <text evidence="3">Belongs to the cytochrome c family.</text>
</comment>
<comment type="sequence caution" evidence="3">
    <conflict type="erroneous gene model prediction">
        <sequence resource="EMBL-CDS" id="ESU17883"/>
    </conflict>
</comment>
<comment type="online information" name="Protein Spotlight">
    <link uri="https://www.proteinspotlight.org/back_issues/076"/>
    <text>Life shuttle - Issue 76 of November 2006</text>
</comment>
<feature type="chain" id="PRO_0000108324" description="Cytochrome c">
    <location>
        <begin position="1"/>
        <end position="106"/>
    </location>
</feature>
<feature type="binding site" description="covalent" evidence="2">
    <location>
        <position position="17"/>
    </location>
    <ligand>
        <name>heme c</name>
        <dbReference type="ChEBI" id="CHEBI:61717"/>
    </ligand>
</feature>
<feature type="binding site" description="covalent" evidence="2">
    <location>
        <position position="20"/>
    </location>
    <ligand>
        <name>heme c</name>
        <dbReference type="ChEBI" id="CHEBI:61717"/>
    </ligand>
</feature>
<feature type="binding site" description="axial binding residue" evidence="2">
    <location>
        <position position="21"/>
    </location>
    <ligand>
        <name>heme c</name>
        <dbReference type="ChEBI" id="CHEBI:61717"/>
    </ligand>
    <ligandPart>
        <name>Fe</name>
        <dbReference type="ChEBI" id="CHEBI:18248"/>
    </ligandPart>
</feature>
<feature type="binding site" description="axial binding residue" evidence="2">
    <location>
        <position position="83"/>
    </location>
    <ligand>
        <name>heme c</name>
        <dbReference type="ChEBI" id="CHEBI:61717"/>
    </ligand>
    <ligandPart>
        <name>Fe</name>
        <dbReference type="ChEBI" id="CHEBI:18248"/>
    </ligandPart>
</feature>
<feature type="modified residue" description="N6,N6,N6-trimethyllysine" evidence="1">
    <location>
        <position position="75"/>
    </location>
</feature>
<dbReference type="EMBL" id="DS231670">
    <property type="protein sequence ID" value="ESU17883.1"/>
    <property type="status" value="ALT_SEQ"/>
    <property type="molecule type" value="Genomic_DNA"/>
</dbReference>
<dbReference type="EMBL" id="HG970334">
    <property type="protein sequence ID" value="SCB64964.1"/>
    <property type="molecule type" value="Genomic_DNA"/>
</dbReference>
<dbReference type="RefSeq" id="XP_011325505.1">
    <property type="nucleotide sequence ID" value="XM_011327203.1"/>
</dbReference>
<dbReference type="SMR" id="Q4HVX7"/>
<dbReference type="FunCoup" id="Q4HVX7">
    <property type="interactions" value="579"/>
</dbReference>
<dbReference type="STRING" id="229533.Q4HVX7"/>
<dbReference type="GeneID" id="23557761"/>
<dbReference type="KEGG" id="fgr:FGSG_10881"/>
<dbReference type="VEuPathDB" id="FungiDB:FGRAMPH1_01G20703"/>
<dbReference type="eggNOG" id="KOG3453">
    <property type="taxonomic scope" value="Eukaryota"/>
</dbReference>
<dbReference type="HOGENOM" id="CLU_060944_3_0_1"/>
<dbReference type="InParanoid" id="Q4HVX7"/>
<dbReference type="OrthoDB" id="4197at110618"/>
<dbReference type="Proteomes" id="UP000070720">
    <property type="component" value="Chromosome 3"/>
</dbReference>
<dbReference type="GO" id="GO:0005758">
    <property type="term" value="C:mitochondrial intermembrane space"/>
    <property type="evidence" value="ECO:0007669"/>
    <property type="project" value="UniProtKB-SubCell"/>
</dbReference>
<dbReference type="GO" id="GO:0009055">
    <property type="term" value="F:electron transfer activity"/>
    <property type="evidence" value="ECO:0007669"/>
    <property type="project" value="InterPro"/>
</dbReference>
<dbReference type="GO" id="GO:0020037">
    <property type="term" value="F:heme binding"/>
    <property type="evidence" value="ECO:0007669"/>
    <property type="project" value="InterPro"/>
</dbReference>
<dbReference type="GO" id="GO:0046872">
    <property type="term" value="F:metal ion binding"/>
    <property type="evidence" value="ECO:0007669"/>
    <property type="project" value="UniProtKB-KW"/>
</dbReference>
<dbReference type="FunFam" id="1.10.760.10:FF:000001">
    <property type="entry name" value="Cytochrome c iso-1"/>
    <property type="match status" value="1"/>
</dbReference>
<dbReference type="Gene3D" id="1.10.760.10">
    <property type="entry name" value="Cytochrome c-like domain"/>
    <property type="match status" value="1"/>
</dbReference>
<dbReference type="InterPro" id="IPR009056">
    <property type="entry name" value="Cyt_c-like_dom"/>
</dbReference>
<dbReference type="InterPro" id="IPR036909">
    <property type="entry name" value="Cyt_c-like_dom_sf"/>
</dbReference>
<dbReference type="InterPro" id="IPR002327">
    <property type="entry name" value="Cyt_c_1A/1B"/>
</dbReference>
<dbReference type="PANTHER" id="PTHR11961">
    <property type="entry name" value="CYTOCHROME C"/>
    <property type="match status" value="1"/>
</dbReference>
<dbReference type="Pfam" id="PF00034">
    <property type="entry name" value="Cytochrom_C"/>
    <property type="match status" value="1"/>
</dbReference>
<dbReference type="PRINTS" id="PR00604">
    <property type="entry name" value="CYTCHRMECIAB"/>
</dbReference>
<dbReference type="SUPFAM" id="SSF46626">
    <property type="entry name" value="Cytochrome c"/>
    <property type="match status" value="1"/>
</dbReference>
<dbReference type="PROSITE" id="PS51007">
    <property type="entry name" value="CYTC"/>
    <property type="match status" value="1"/>
</dbReference>
<keyword id="KW-0249">Electron transport</keyword>
<keyword id="KW-0349">Heme</keyword>
<keyword id="KW-0408">Iron</keyword>
<keyword id="KW-0479">Metal-binding</keyword>
<keyword id="KW-0488">Methylation</keyword>
<keyword id="KW-0496">Mitochondrion</keyword>
<keyword id="KW-1185">Reference proteome</keyword>
<keyword id="KW-0679">Respiratory chain</keyword>
<keyword id="KW-0813">Transport</keyword>
<gene>
    <name type="primary">CYC1</name>
    <name type="ORF">FGRAMPH1_01T20703</name>
    <name type="ORF">FGRRES_10881_M</name>
    <name type="ORF">FGSG_10881</name>
</gene>
<name>CYC_GIBZE</name>
<protein>
    <recommendedName>
        <fullName>Cytochrome c</fullName>
    </recommendedName>
</protein>
<evidence type="ECO:0000250" key="1"/>
<evidence type="ECO:0000255" key="2">
    <source>
        <dbReference type="PROSITE-ProRule" id="PRU00433"/>
    </source>
</evidence>
<evidence type="ECO:0000305" key="3"/>
<organism>
    <name type="scientific">Gibberella zeae (strain ATCC MYA-4620 / CBS 123657 / FGSC 9075 / NRRL 31084 / PH-1)</name>
    <name type="common">Wheat head blight fungus</name>
    <name type="synonym">Fusarium graminearum</name>
    <dbReference type="NCBI Taxonomy" id="229533"/>
    <lineage>
        <taxon>Eukaryota</taxon>
        <taxon>Fungi</taxon>
        <taxon>Dikarya</taxon>
        <taxon>Ascomycota</taxon>
        <taxon>Pezizomycotina</taxon>
        <taxon>Sordariomycetes</taxon>
        <taxon>Hypocreomycetidae</taxon>
        <taxon>Hypocreales</taxon>
        <taxon>Nectriaceae</taxon>
        <taxon>Fusarium</taxon>
    </lineage>
</organism>
<sequence length="106" mass="11714">MAGGDIKKGANLFKTRCAQCHTVEKDGGNKIGPALHGLWGRKTGSVEGYSYTDANKQKGIEWNDDTLFEYLENPKKYIPGTKMAFGGLKKAKDRNDLIAYLKDSTK</sequence>